<feature type="chain" id="PRO_0000262446" description="Succinylornithine transaminase">
    <location>
        <begin position="1"/>
        <end position="414"/>
    </location>
</feature>
<feature type="modified residue" description="N6-(pyridoxal phosphate)lysine" evidence="1">
    <location>
        <position position="260"/>
    </location>
</feature>
<organism>
    <name type="scientific">Yersinia pseudotuberculosis serotype I (strain IP32953)</name>
    <dbReference type="NCBI Taxonomy" id="273123"/>
    <lineage>
        <taxon>Bacteria</taxon>
        <taxon>Pseudomonadati</taxon>
        <taxon>Pseudomonadota</taxon>
        <taxon>Gammaproteobacteria</taxon>
        <taxon>Enterobacterales</taxon>
        <taxon>Yersiniaceae</taxon>
        <taxon>Yersinia</taxon>
    </lineage>
</organism>
<keyword id="KW-0032">Aminotransferase</keyword>
<keyword id="KW-0056">Arginine metabolism</keyword>
<keyword id="KW-0663">Pyridoxal phosphate</keyword>
<keyword id="KW-0808">Transferase</keyword>
<dbReference type="EC" id="2.6.1.81" evidence="1"/>
<dbReference type="EMBL" id="BX936398">
    <property type="protein sequence ID" value="CAH21197.1"/>
    <property type="molecule type" value="Genomic_DNA"/>
</dbReference>
<dbReference type="RefSeq" id="WP_011192370.1">
    <property type="nucleotide sequence ID" value="NC_006155.1"/>
</dbReference>
<dbReference type="SMR" id="Q66B21"/>
<dbReference type="KEGG" id="ypo:BZ17_510"/>
<dbReference type="KEGG" id="yps:YPTB1959"/>
<dbReference type="PATRIC" id="fig|273123.14.peg.545"/>
<dbReference type="UniPathway" id="UPA00185">
    <property type="reaction ID" value="UER00281"/>
</dbReference>
<dbReference type="Proteomes" id="UP000001011">
    <property type="component" value="Chromosome"/>
</dbReference>
<dbReference type="GO" id="GO:0042802">
    <property type="term" value="F:identical protein binding"/>
    <property type="evidence" value="ECO:0007669"/>
    <property type="project" value="TreeGrafter"/>
</dbReference>
<dbReference type="GO" id="GO:0030170">
    <property type="term" value="F:pyridoxal phosphate binding"/>
    <property type="evidence" value="ECO:0007669"/>
    <property type="project" value="UniProtKB-UniRule"/>
</dbReference>
<dbReference type="GO" id="GO:0043825">
    <property type="term" value="F:succinylornithine transaminase activity"/>
    <property type="evidence" value="ECO:0007669"/>
    <property type="project" value="UniProtKB-EC"/>
</dbReference>
<dbReference type="GO" id="GO:1901607">
    <property type="term" value="P:alpha-amino acid biosynthetic process"/>
    <property type="evidence" value="ECO:0007669"/>
    <property type="project" value="UniProtKB-ARBA"/>
</dbReference>
<dbReference type="GO" id="GO:0019544">
    <property type="term" value="P:arginine catabolic process to glutamate"/>
    <property type="evidence" value="ECO:0007669"/>
    <property type="project" value="UniProtKB-UniRule"/>
</dbReference>
<dbReference type="GO" id="GO:0019545">
    <property type="term" value="P:arginine catabolic process to succinate"/>
    <property type="evidence" value="ECO:0007669"/>
    <property type="project" value="UniProtKB-UniRule"/>
</dbReference>
<dbReference type="GO" id="GO:0006593">
    <property type="term" value="P:ornithine catabolic process"/>
    <property type="evidence" value="ECO:0007669"/>
    <property type="project" value="InterPro"/>
</dbReference>
<dbReference type="CDD" id="cd00610">
    <property type="entry name" value="OAT_like"/>
    <property type="match status" value="1"/>
</dbReference>
<dbReference type="FunFam" id="3.40.640.10:FF:000004">
    <property type="entry name" value="Acetylornithine aminotransferase"/>
    <property type="match status" value="1"/>
</dbReference>
<dbReference type="Gene3D" id="3.90.1150.10">
    <property type="entry name" value="Aspartate Aminotransferase, domain 1"/>
    <property type="match status" value="1"/>
</dbReference>
<dbReference type="Gene3D" id="3.40.640.10">
    <property type="entry name" value="Type I PLP-dependent aspartate aminotransferase-like (Major domain)"/>
    <property type="match status" value="1"/>
</dbReference>
<dbReference type="HAMAP" id="MF_01107">
    <property type="entry name" value="ArgD_aminotrans_3"/>
    <property type="match status" value="1"/>
</dbReference>
<dbReference type="HAMAP" id="MF_01173">
    <property type="entry name" value="AstC_aminotrans_3"/>
    <property type="match status" value="1"/>
</dbReference>
<dbReference type="InterPro" id="IPR017652">
    <property type="entry name" value="Ac/SucOrn_transaminase_bac"/>
</dbReference>
<dbReference type="InterPro" id="IPR004636">
    <property type="entry name" value="AcOrn/SuccOrn_fam"/>
</dbReference>
<dbReference type="InterPro" id="IPR005814">
    <property type="entry name" value="Aminotrans_3"/>
</dbReference>
<dbReference type="InterPro" id="IPR049704">
    <property type="entry name" value="Aminotrans_3_PPA_site"/>
</dbReference>
<dbReference type="InterPro" id="IPR050103">
    <property type="entry name" value="Class-III_PLP-dep_AT"/>
</dbReference>
<dbReference type="InterPro" id="IPR015424">
    <property type="entry name" value="PyrdxlP-dep_Trfase"/>
</dbReference>
<dbReference type="InterPro" id="IPR015421">
    <property type="entry name" value="PyrdxlP-dep_Trfase_major"/>
</dbReference>
<dbReference type="InterPro" id="IPR015422">
    <property type="entry name" value="PyrdxlP-dep_Trfase_small"/>
</dbReference>
<dbReference type="InterPro" id="IPR026330">
    <property type="entry name" value="SOAT"/>
</dbReference>
<dbReference type="NCBIfam" id="TIGR03246">
    <property type="entry name" value="arg_catab_astC"/>
    <property type="match status" value="1"/>
</dbReference>
<dbReference type="NCBIfam" id="TIGR00707">
    <property type="entry name" value="argD"/>
    <property type="match status" value="1"/>
</dbReference>
<dbReference type="NCBIfam" id="NF002325">
    <property type="entry name" value="PRK01278.1"/>
    <property type="match status" value="1"/>
</dbReference>
<dbReference type="NCBIfam" id="NF003468">
    <property type="entry name" value="PRK05093.1"/>
    <property type="match status" value="1"/>
</dbReference>
<dbReference type="NCBIfam" id="NF009047">
    <property type="entry name" value="PRK12381.1"/>
    <property type="match status" value="1"/>
</dbReference>
<dbReference type="PANTHER" id="PTHR11986">
    <property type="entry name" value="AMINOTRANSFERASE CLASS III"/>
    <property type="match status" value="1"/>
</dbReference>
<dbReference type="PANTHER" id="PTHR11986:SF113">
    <property type="entry name" value="SUCCINYLORNITHINE TRANSAMINASE"/>
    <property type="match status" value="1"/>
</dbReference>
<dbReference type="Pfam" id="PF00202">
    <property type="entry name" value="Aminotran_3"/>
    <property type="match status" value="1"/>
</dbReference>
<dbReference type="PIRSF" id="PIRSF000521">
    <property type="entry name" value="Transaminase_4ab_Lys_Orn"/>
    <property type="match status" value="1"/>
</dbReference>
<dbReference type="SUPFAM" id="SSF53383">
    <property type="entry name" value="PLP-dependent transferases"/>
    <property type="match status" value="1"/>
</dbReference>
<dbReference type="PROSITE" id="PS00600">
    <property type="entry name" value="AA_TRANSFER_CLASS_3"/>
    <property type="match status" value="1"/>
</dbReference>
<sequence>MEQPSPVTRQSFDEWLVPTYAPADFIVVRGEGSTLWDQQGKSYIDFAGGIAVNALGHGHPAVRAALIEQADKVWHLGNGYTNEPVLRLAKQLIDATFAEKVFFCNSGAEANEAALKLARKYALDNFANKAGQQGEKNQIVAFRNAFHGRTLFTVSAGGQPKYSQDFAPLPGGIHHGIFNDLASAEHLITDQTCAVIVEPIQGEGGVLPADKEFLHGLRALCDRHNALLIFDEIQTGVGRTGELYAYMHYGVSPDVLTSAKALGGGFPIGAMLTTTKYASALSVGSHGTTFGGNPLACAVAGTVLSLINQPTLLAGVKARHQWFIDELAEINARHNVFAEIRGRGLLIGCVLNAQYAGKSKEIVQAAAQYGLIALIAGPDVVRFAPSLIISPKEIKEGLARLAMGIEQVCQKVTS</sequence>
<reference key="1">
    <citation type="journal article" date="2004" name="Proc. Natl. Acad. Sci. U.S.A.">
        <title>Insights into the evolution of Yersinia pestis through whole-genome comparison with Yersinia pseudotuberculosis.</title>
        <authorList>
            <person name="Chain P.S.G."/>
            <person name="Carniel E."/>
            <person name="Larimer F.W."/>
            <person name="Lamerdin J."/>
            <person name="Stoutland P.O."/>
            <person name="Regala W.M."/>
            <person name="Georgescu A.M."/>
            <person name="Vergez L.M."/>
            <person name="Land M.L."/>
            <person name="Motin V.L."/>
            <person name="Brubaker R.R."/>
            <person name="Fowler J."/>
            <person name="Hinnebusch J."/>
            <person name="Marceau M."/>
            <person name="Medigue C."/>
            <person name="Simonet M."/>
            <person name="Chenal-Francisque V."/>
            <person name="Souza B."/>
            <person name="Dacheux D."/>
            <person name="Elliott J.M."/>
            <person name="Derbise A."/>
            <person name="Hauser L.J."/>
            <person name="Garcia E."/>
        </authorList>
    </citation>
    <scope>NUCLEOTIDE SEQUENCE [LARGE SCALE GENOMIC DNA]</scope>
    <source>
        <strain>IP32953</strain>
    </source>
</reference>
<gene>
    <name evidence="1" type="primary">astC</name>
    <name evidence="1" type="synonym">argM</name>
    <name type="ordered locus">YPTB1959</name>
</gene>
<protein>
    <recommendedName>
        <fullName evidence="1">Succinylornithine transaminase</fullName>
        <shortName>SOAT</shortName>
        <ecNumber evidence="1">2.6.1.81</ecNumber>
    </recommendedName>
    <alternativeName>
        <fullName evidence="1">Succinylornithine aminotransferase</fullName>
    </alternativeName>
</protein>
<proteinExistence type="inferred from homology"/>
<comment type="function">
    <text evidence="1">Catalyzes the transamination of N(2)-succinylornithine and alpha-ketoglutarate into N(2)-succinylglutamate semialdehyde and glutamate. Can also act as an acetylornithine aminotransferase.</text>
</comment>
<comment type="catalytic activity">
    <reaction evidence="1">
        <text>N(2)-succinyl-L-ornithine + 2-oxoglutarate = N-succinyl-L-glutamate 5-semialdehyde + L-glutamate</text>
        <dbReference type="Rhea" id="RHEA:16953"/>
        <dbReference type="ChEBI" id="CHEBI:16810"/>
        <dbReference type="ChEBI" id="CHEBI:29985"/>
        <dbReference type="ChEBI" id="CHEBI:58514"/>
        <dbReference type="ChEBI" id="CHEBI:58520"/>
        <dbReference type="EC" id="2.6.1.81"/>
    </reaction>
</comment>
<comment type="cofactor">
    <cofactor evidence="1">
        <name>pyridoxal 5'-phosphate</name>
        <dbReference type="ChEBI" id="CHEBI:597326"/>
    </cofactor>
</comment>
<comment type="pathway">
    <text evidence="1">Amino-acid degradation; L-arginine degradation via AST pathway; L-glutamate and succinate from L-arginine: step 3/5.</text>
</comment>
<comment type="similarity">
    <text evidence="1">Belongs to the class-III pyridoxal-phosphate-dependent aminotransferase family. AstC subfamily.</text>
</comment>
<evidence type="ECO:0000255" key="1">
    <source>
        <dbReference type="HAMAP-Rule" id="MF_01173"/>
    </source>
</evidence>
<name>ASTC_YERPS</name>
<accession>Q66B21</accession>